<proteinExistence type="evidence at protein level"/>
<comment type="subunit">
    <text evidence="1">Associates with the RNA polymerase II complex.</text>
</comment>
<comment type="alternative products">
    <event type="alternative splicing"/>
    <isoform>
        <id>Q6NXI6-1</id>
        <name>1</name>
        <sequence type="displayed"/>
    </isoform>
    <isoform>
        <id>Q6NXI6-2</id>
        <name>2</name>
        <sequence type="described" ref="VSP_019548"/>
    </isoform>
</comment>
<gene>
    <name type="primary">Rprd2</name>
    <name type="synonym">Kiaa0460</name>
</gene>
<dbReference type="EMBL" id="BC067054">
    <property type="protein sequence ID" value="AAH67054.1"/>
    <property type="molecule type" value="mRNA"/>
</dbReference>
<dbReference type="EMBL" id="AK129150">
    <property type="protein sequence ID" value="BAC97960.1"/>
    <property type="molecule type" value="mRNA"/>
</dbReference>
<dbReference type="EMBL" id="AK154692">
    <property type="protein sequence ID" value="BAE32767.1"/>
    <property type="molecule type" value="mRNA"/>
</dbReference>
<dbReference type="CCDS" id="CCDS38549.1">
    <molecule id="Q6NXI6-1"/>
</dbReference>
<dbReference type="RefSeq" id="NP_001074762.1">
    <molecule id="Q6NXI6-1"/>
    <property type="nucleotide sequence ID" value="NM_001081293.2"/>
</dbReference>
<dbReference type="RefSeq" id="NP_001355108.1">
    <molecule id="Q6NXI6-2"/>
    <property type="nucleotide sequence ID" value="NM_001368179.1"/>
</dbReference>
<dbReference type="RefSeq" id="XP_006502291.1">
    <property type="nucleotide sequence ID" value="XM_006502228.3"/>
</dbReference>
<dbReference type="SMR" id="Q6NXI6"/>
<dbReference type="FunCoup" id="Q6NXI6">
    <property type="interactions" value="2366"/>
</dbReference>
<dbReference type="STRING" id="10090.ENSMUSP00000088297"/>
<dbReference type="GlyGen" id="Q6NXI6">
    <property type="glycosylation" value="16 sites, 2 N-linked glycans (2 sites), 1 O-linked glycan (11 sites)"/>
</dbReference>
<dbReference type="iPTMnet" id="Q6NXI6"/>
<dbReference type="PhosphoSitePlus" id="Q6NXI6"/>
<dbReference type="SwissPalm" id="Q6NXI6"/>
<dbReference type="jPOST" id="Q6NXI6"/>
<dbReference type="PaxDb" id="10090-ENSMUSP00000088297"/>
<dbReference type="PeptideAtlas" id="Q6NXI6"/>
<dbReference type="ProteomicsDB" id="299948">
    <molecule id="Q6NXI6-1"/>
</dbReference>
<dbReference type="ProteomicsDB" id="299949">
    <molecule id="Q6NXI6-2"/>
</dbReference>
<dbReference type="Pumba" id="Q6NXI6"/>
<dbReference type="Antibodypedia" id="10548">
    <property type="antibodies" value="64 antibodies from 16 providers"/>
</dbReference>
<dbReference type="Ensembl" id="ENSMUST00000090791.8">
    <molecule id="Q6NXI6-1"/>
    <property type="protein sequence ID" value="ENSMUSP00000088297.4"/>
    <property type="gene ID" value="ENSMUSG00000028106.14"/>
</dbReference>
<dbReference type="GeneID" id="75137"/>
<dbReference type="KEGG" id="mmu:75137"/>
<dbReference type="UCSC" id="uc008qkx.1">
    <molecule id="Q6NXI6-1"/>
    <property type="organism name" value="mouse"/>
</dbReference>
<dbReference type="UCSC" id="uc008qky.1">
    <molecule id="Q6NXI6-2"/>
    <property type="organism name" value="mouse"/>
</dbReference>
<dbReference type="AGR" id="MGI:1922387"/>
<dbReference type="CTD" id="23248"/>
<dbReference type="MGI" id="MGI:1922387">
    <property type="gene designation" value="Rprd2"/>
</dbReference>
<dbReference type="VEuPathDB" id="HostDB:ENSMUSG00000028106"/>
<dbReference type="eggNOG" id="KOG2669">
    <property type="taxonomic scope" value="Eukaryota"/>
</dbReference>
<dbReference type="GeneTree" id="ENSGT00950000183094"/>
<dbReference type="HOGENOM" id="CLU_004610_0_0_1"/>
<dbReference type="InParanoid" id="Q6NXI6"/>
<dbReference type="OMA" id="NYSHRAQ"/>
<dbReference type="OrthoDB" id="10069473at2759"/>
<dbReference type="PhylomeDB" id="Q6NXI6"/>
<dbReference type="TreeFam" id="TF320926"/>
<dbReference type="Reactome" id="R-MMU-6807505">
    <property type="pathway name" value="RNA polymerase II transcribes snRNA genes"/>
</dbReference>
<dbReference type="BioGRID-ORCS" id="75137">
    <property type="hits" value="14 hits in 78 CRISPR screens"/>
</dbReference>
<dbReference type="ChiTaRS" id="Rprd2">
    <property type="organism name" value="mouse"/>
</dbReference>
<dbReference type="PRO" id="PR:Q6NXI6"/>
<dbReference type="Proteomes" id="UP000000589">
    <property type="component" value="Chromosome 3"/>
</dbReference>
<dbReference type="RNAct" id="Q6NXI6">
    <property type="molecule type" value="protein"/>
</dbReference>
<dbReference type="Bgee" id="ENSMUSG00000028106">
    <property type="expression patterns" value="Expressed in secondary oocyte and 235 other cell types or tissues"/>
</dbReference>
<dbReference type="ExpressionAtlas" id="Q6NXI6">
    <property type="expression patterns" value="baseline and differential"/>
</dbReference>
<dbReference type="GO" id="GO:0097550">
    <property type="term" value="C:transcription preinitiation complex"/>
    <property type="evidence" value="ECO:0000250"/>
    <property type="project" value="UniProtKB"/>
</dbReference>
<dbReference type="GO" id="GO:0099122">
    <property type="term" value="F:RNA polymerase II C-terminal domain binding"/>
    <property type="evidence" value="ECO:0007669"/>
    <property type="project" value="InterPro"/>
</dbReference>
<dbReference type="CDD" id="cd17001">
    <property type="entry name" value="CID_RPRD2"/>
    <property type="match status" value="1"/>
</dbReference>
<dbReference type="FunFam" id="1.25.40.90:FF:000020">
    <property type="entry name" value="regulation of nuclear pre-mRNA domain-containing protein 2 isoform X1"/>
    <property type="match status" value="1"/>
</dbReference>
<dbReference type="Gene3D" id="1.25.40.90">
    <property type="match status" value="1"/>
</dbReference>
<dbReference type="Gene3D" id="6.10.250.2560">
    <property type="match status" value="1"/>
</dbReference>
<dbReference type="InterPro" id="IPR006569">
    <property type="entry name" value="CID_dom"/>
</dbReference>
<dbReference type="InterPro" id="IPR008942">
    <property type="entry name" value="ENTH_VHS"/>
</dbReference>
<dbReference type="InterPro" id="IPR047885">
    <property type="entry name" value="RPRD2_CID"/>
</dbReference>
<dbReference type="PANTHER" id="PTHR12460">
    <property type="entry name" value="CYCLIN-DEPENDENT KINASE INHIBITOR-RELATED PROTEIN"/>
    <property type="match status" value="1"/>
</dbReference>
<dbReference type="PANTHER" id="PTHR12460:SF40">
    <property type="entry name" value="REGULATION OF NUCLEAR PRE-MRNA DOMAIN-CONTAINING PROTEIN 2"/>
    <property type="match status" value="1"/>
</dbReference>
<dbReference type="Pfam" id="PF04818">
    <property type="entry name" value="CID"/>
    <property type="match status" value="1"/>
</dbReference>
<dbReference type="SMART" id="SM00582">
    <property type="entry name" value="RPR"/>
    <property type="match status" value="1"/>
</dbReference>
<dbReference type="SUPFAM" id="SSF48464">
    <property type="entry name" value="ENTH/VHS domain"/>
    <property type="match status" value="1"/>
</dbReference>
<dbReference type="PROSITE" id="PS51391">
    <property type="entry name" value="CID"/>
    <property type="match status" value="1"/>
</dbReference>
<evidence type="ECO:0000250" key="1"/>
<evidence type="ECO:0000250" key="2">
    <source>
        <dbReference type="UniProtKB" id="Q5VT52"/>
    </source>
</evidence>
<evidence type="ECO:0000255" key="3">
    <source>
        <dbReference type="PROSITE-ProRule" id="PRU00724"/>
    </source>
</evidence>
<evidence type="ECO:0000256" key="4">
    <source>
        <dbReference type="SAM" id="MobiDB-lite"/>
    </source>
</evidence>
<evidence type="ECO:0000303" key="5">
    <source>
    </source>
</evidence>
<evidence type="ECO:0000303" key="6">
    <source>
    </source>
</evidence>
<evidence type="ECO:0000305" key="7"/>
<evidence type="ECO:0007744" key="8">
    <source>
    </source>
</evidence>
<evidence type="ECO:0007744" key="9">
    <source>
    </source>
</evidence>
<evidence type="ECO:0007744" key="10">
    <source>
    </source>
</evidence>
<evidence type="ECO:0007744" key="11">
    <source>
    </source>
</evidence>
<protein>
    <recommendedName>
        <fullName>Regulation of nuclear pre-mRNA domain-containing protein 2</fullName>
    </recommendedName>
</protein>
<organism>
    <name type="scientific">Mus musculus</name>
    <name type="common">Mouse</name>
    <dbReference type="NCBI Taxonomy" id="10090"/>
    <lineage>
        <taxon>Eukaryota</taxon>
        <taxon>Metazoa</taxon>
        <taxon>Chordata</taxon>
        <taxon>Craniata</taxon>
        <taxon>Vertebrata</taxon>
        <taxon>Euteleostomi</taxon>
        <taxon>Mammalia</taxon>
        <taxon>Eutheria</taxon>
        <taxon>Euarchontoglires</taxon>
        <taxon>Glires</taxon>
        <taxon>Rodentia</taxon>
        <taxon>Myomorpha</taxon>
        <taxon>Muroidea</taxon>
        <taxon>Muridae</taxon>
        <taxon>Murinae</taxon>
        <taxon>Mus</taxon>
        <taxon>Mus</taxon>
    </lineage>
</organism>
<sequence length="1469" mass="156586">MAAGGGGGSSKASSSSASSAGALESSLDRKFQSVTNTMESIQGLSSWCIENKKHHSTIVYHWMKWLRRSTYPHRLNLFYLANDVIQNCKRKNAIIFRESFADVLPEAAALVKDPSVSKSIERIFKIWEDRNVYPEDMIVALREALMDRAASHNARLQKLQCFPGTTFKTQKQLKENLNKQPNKQWKKSQTSTNPKAALKSKIVAEFRSQALIEELLMYKRSEDQIELKEKQLSTMRVDVCSTETLKCLKDKTGGKKFSKEFEEASSKLEEFVNGLDKQVKNGPSLTEALENAGIFYEAQYKEVKVVANAYKTFANRVNNLKKKLDQLKSTLPDPEESPVPSPSMDAPSPTGSESPFQGMGGEEPQSPAMESDKSATPEPVTDNRDVEDMELSDVEDDGSKIIVEDRKEKPVEKPAVSTGVPTKSTESVSKASPCAPPSVPTTAAPPLPKPLSTALLSPSPTLVLPNLANVDLAKISSILSSLTSVMKNTGVSSASRPSPGIPTSPSNLSSGLKTPAPATTPSHNPLANILSKVEITPESILSALSKTQTQSAPALQGLSSLLQSVTANPVPASEVTSQSTTASPASTTGSAVKGRNLLSSTQSFIPKSFNYSPSSSTSEVSSTSASKASVGQSPVLPSTTFKLPSSSLGFTGTHNPSPAAPPTEVAVCQSSEVSKPKPESESTSPSLEMKIHNFLKGNPGFSGLNLNIPILSSLGSSAPSEGHASDFQRGPTSTSVDSIDGTPVRDERSGTPTQDEMMDKPTSSSVDTMSLLSKIISPGSSTPSSTRSPPPGRDESYPQELPNSVSTYRPFGLGSDSPYKQPSGGVERPSSLMDSSQEKLFPDTSFQEDEDYRDFEYSGPPPSAMMNLEKKPAKSILKSSKLSDATEYQPILSSYNHRAQEFGVKSAFPPSVRALLDSSENCDRLSSPPGLFGAFNIRGNEPGSERSPSPSKNDAFFTPDSNHSGLSQSTAGHLTLPQTQYPDSPHSVPHRSIFSSQSTLAAPAGHPPTSGVEKVLASTISTTSTIEFKNMLKNASRKPSDDKHFGQTPNKGTSSDGVSLSNLTQPSLPTTDQQQEEHYRIETRVSSSCLDLPDSTEEKGAPIETLGYHNAANRRMSGEPIKTVESIRVPGKGNRGHGREVSRVGWFDLSTPGSSFDNGPSSASELASLGGGGSGGLTGFKTTPYKERAPQFQESVTSFRSNSFNSTFEHHLPPSPLEHGAPFQREPVGPSSAPPAPPKDHGGIFSREAPTHLPSVDLSNPFTKEASLAHAGPPPPPGEHSGVPFPPPPPPPPPGELSSGGTGVPFATPAPPPPPVDHSGVVPFPTPPLPEHGVTGAVSVFPKDHSSLLQGTMAEHFGVLTGPRDLNGPGLNRSRESLSLPSHPLEHLGPALGGGGGGNTSSSGLPLSPAHRDAIGRSGMILRSPRPDFRPREAFLGRDPFHSLKRPRPPFVRGPPFFAPKRPFFPPRY</sequence>
<accession>Q6NXI6</accession>
<accession>Q3U3L8</accession>
<accession>Q6ZQA7</accession>
<reference key="1">
    <citation type="journal article" date="2004" name="Genome Res.">
        <title>The status, quality, and expansion of the NIH full-length cDNA project: the Mammalian Gene Collection (MGC).</title>
        <authorList>
            <consortium name="The MGC Project Team"/>
        </authorList>
    </citation>
    <scope>NUCLEOTIDE SEQUENCE [LARGE SCALE MRNA] (ISOFORM 1)</scope>
    <source>
        <strain>C57BL/6J</strain>
        <tissue>Brain</tissue>
    </source>
</reference>
<reference key="2">
    <citation type="journal article" date="2005" name="Science">
        <title>The transcriptional landscape of the mammalian genome.</title>
        <authorList>
            <person name="Carninci P."/>
            <person name="Kasukawa T."/>
            <person name="Katayama S."/>
            <person name="Gough J."/>
            <person name="Frith M.C."/>
            <person name="Maeda N."/>
            <person name="Oyama R."/>
            <person name="Ravasi T."/>
            <person name="Lenhard B."/>
            <person name="Wells C."/>
            <person name="Kodzius R."/>
            <person name="Shimokawa K."/>
            <person name="Bajic V.B."/>
            <person name="Brenner S.E."/>
            <person name="Batalov S."/>
            <person name="Forrest A.R."/>
            <person name="Zavolan M."/>
            <person name="Davis M.J."/>
            <person name="Wilming L.G."/>
            <person name="Aidinis V."/>
            <person name="Allen J.E."/>
            <person name="Ambesi-Impiombato A."/>
            <person name="Apweiler R."/>
            <person name="Aturaliya R.N."/>
            <person name="Bailey T.L."/>
            <person name="Bansal M."/>
            <person name="Baxter L."/>
            <person name="Beisel K.W."/>
            <person name="Bersano T."/>
            <person name="Bono H."/>
            <person name="Chalk A.M."/>
            <person name="Chiu K.P."/>
            <person name="Choudhary V."/>
            <person name="Christoffels A."/>
            <person name="Clutterbuck D.R."/>
            <person name="Crowe M.L."/>
            <person name="Dalla E."/>
            <person name="Dalrymple B.P."/>
            <person name="de Bono B."/>
            <person name="Della Gatta G."/>
            <person name="di Bernardo D."/>
            <person name="Down T."/>
            <person name="Engstrom P."/>
            <person name="Fagiolini M."/>
            <person name="Faulkner G."/>
            <person name="Fletcher C.F."/>
            <person name="Fukushima T."/>
            <person name="Furuno M."/>
            <person name="Futaki S."/>
            <person name="Gariboldi M."/>
            <person name="Georgii-Hemming P."/>
            <person name="Gingeras T.R."/>
            <person name="Gojobori T."/>
            <person name="Green R.E."/>
            <person name="Gustincich S."/>
            <person name="Harbers M."/>
            <person name="Hayashi Y."/>
            <person name="Hensch T.K."/>
            <person name="Hirokawa N."/>
            <person name="Hill D."/>
            <person name="Huminiecki L."/>
            <person name="Iacono M."/>
            <person name="Ikeo K."/>
            <person name="Iwama A."/>
            <person name="Ishikawa T."/>
            <person name="Jakt M."/>
            <person name="Kanapin A."/>
            <person name="Katoh M."/>
            <person name="Kawasawa Y."/>
            <person name="Kelso J."/>
            <person name="Kitamura H."/>
            <person name="Kitano H."/>
            <person name="Kollias G."/>
            <person name="Krishnan S.P."/>
            <person name="Kruger A."/>
            <person name="Kummerfeld S.K."/>
            <person name="Kurochkin I.V."/>
            <person name="Lareau L.F."/>
            <person name="Lazarevic D."/>
            <person name="Lipovich L."/>
            <person name="Liu J."/>
            <person name="Liuni S."/>
            <person name="McWilliam S."/>
            <person name="Madan Babu M."/>
            <person name="Madera M."/>
            <person name="Marchionni L."/>
            <person name="Matsuda H."/>
            <person name="Matsuzawa S."/>
            <person name="Miki H."/>
            <person name="Mignone F."/>
            <person name="Miyake S."/>
            <person name="Morris K."/>
            <person name="Mottagui-Tabar S."/>
            <person name="Mulder N."/>
            <person name="Nakano N."/>
            <person name="Nakauchi H."/>
            <person name="Ng P."/>
            <person name="Nilsson R."/>
            <person name="Nishiguchi S."/>
            <person name="Nishikawa S."/>
            <person name="Nori F."/>
            <person name="Ohara O."/>
            <person name="Okazaki Y."/>
            <person name="Orlando V."/>
            <person name="Pang K.C."/>
            <person name="Pavan W.J."/>
            <person name="Pavesi G."/>
            <person name="Pesole G."/>
            <person name="Petrovsky N."/>
            <person name="Piazza S."/>
            <person name="Reed J."/>
            <person name="Reid J.F."/>
            <person name="Ring B.Z."/>
            <person name="Ringwald M."/>
            <person name="Rost B."/>
            <person name="Ruan Y."/>
            <person name="Salzberg S.L."/>
            <person name="Sandelin A."/>
            <person name="Schneider C."/>
            <person name="Schoenbach C."/>
            <person name="Sekiguchi K."/>
            <person name="Semple C.A."/>
            <person name="Seno S."/>
            <person name="Sessa L."/>
            <person name="Sheng Y."/>
            <person name="Shibata Y."/>
            <person name="Shimada H."/>
            <person name="Shimada K."/>
            <person name="Silva D."/>
            <person name="Sinclair B."/>
            <person name="Sperling S."/>
            <person name="Stupka E."/>
            <person name="Sugiura K."/>
            <person name="Sultana R."/>
            <person name="Takenaka Y."/>
            <person name="Taki K."/>
            <person name="Tammoja K."/>
            <person name="Tan S.L."/>
            <person name="Tang S."/>
            <person name="Taylor M.S."/>
            <person name="Tegner J."/>
            <person name="Teichmann S.A."/>
            <person name="Ueda H.R."/>
            <person name="van Nimwegen E."/>
            <person name="Verardo R."/>
            <person name="Wei C.L."/>
            <person name="Yagi K."/>
            <person name="Yamanishi H."/>
            <person name="Zabarovsky E."/>
            <person name="Zhu S."/>
            <person name="Zimmer A."/>
            <person name="Hide W."/>
            <person name="Bult C."/>
            <person name="Grimmond S.M."/>
            <person name="Teasdale R.D."/>
            <person name="Liu E.T."/>
            <person name="Brusic V."/>
            <person name="Quackenbush J."/>
            <person name="Wahlestedt C."/>
            <person name="Mattick J.S."/>
            <person name="Hume D.A."/>
            <person name="Kai C."/>
            <person name="Sasaki D."/>
            <person name="Tomaru Y."/>
            <person name="Fukuda S."/>
            <person name="Kanamori-Katayama M."/>
            <person name="Suzuki M."/>
            <person name="Aoki J."/>
            <person name="Arakawa T."/>
            <person name="Iida J."/>
            <person name="Imamura K."/>
            <person name="Itoh M."/>
            <person name="Kato T."/>
            <person name="Kawaji H."/>
            <person name="Kawagashira N."/>
            <person name="Kawashima T."/>
            <person name="Kojima M."/>
            <person name="Kondo S."/>
            <person name="Konno H."/>
            <person name="Nakano K."/>
            <person name="Ninomiya N."/>
            <person name="Nishio T."/>
            <person name="Okada M."/>
            <person name="Plessy C."/>
            <person name="Shibata K."/>
            <person name="Shiraki T."/>
            <person name="Suzuki S."/>
            <person name="Tagami M."/>
            <person name="Waki K."/>
            <person name="Watahiki A."/>
            <person name="Okamura-Oho Y."/>
            <person name="Suzuki H."/>
            <person name="Kawai J."/>
            <person name="Hayashizaki Y."/>
        </authorList>
    </citation>
    <scope>NUCLEOTIDE SEQUENCE [LARGE SCALE MRNA] OF 1-491 (ISOFORM 2)</scope>
    <source>
        <strain>NOD</strain>
        <tissue>Dendritic cell</tissue>
    </source>
</reference>
<reference key="3">
    <citation type="journal article" date="2003" name="DNA Res.">
        <title>Prediction of the coding sequences of mouse homologues of KIAA gene: III. The complete nucleotide sequences of 500 mouse KIAA-homologous cDNAs identified by screening of terminal sequences of cDNA clones randomly sampled from size-fractionated libraries.</title>
        <authorList>
            <person name="Okazaki N."/>
            <person name="Kikuno R."/>
            <person name="Ohara R."/>
            <person name="Inamoto S."/>
            <person name="Koseki H."/>
            <person name="Hiraoka S."/>
            <person name="Saga Y."/>
            <person name="Nagase T."/>
            <person name="Ohara O."/>
            <person name="Koga H."/>
        </authorList>
    </citation>
    <scope>NUCLEOTIDE SEQUENCE [LARGE SCALE MRNA] OF 41-1469 (ISOFORM 2)</scope>
    <source>
        <tissue>Embryonic tail</tissue>
    </source>
</reference>
<reference key="4">
    <citation type="journal article" date="2007" name="Proc. Natl. Acad. Sci. U.S.A.">
        <title>Large-scale phosphorylation analysis of mouse liver.</title>
        <authorList>
            <person name="Villen J."/>
            <person name="Beausoleil S.A."/>
            <person name="Gerber S.A."/>
            <person name="Gygi S.P."/>
        </authorList>
    </citation>
    <scope>PHOSPHORYLATION [LARGE SCALE ANALYSIS] AT SER-392; SER-738 AND THR-742</scope>
    <scope>IDENTIFICATION BY MASS SPECTROMETRY [LARGE SCALE ANALYSIS]</scope>
    <source>
        <tissue>Liver</tissue>
    </source>
</reference>
<reference key="5">
    <citation type="journal article" date="2009" name="Immunity">
        <title>The phagosomal proteome in interferon-gamma-activated macrophages.</title>
        <authorList>
            <person name="Trost M."/>
            <person name="English L."/>
            <person name="Lemieux S."/>
            <person name="Courcelles M."/>
            <person name="Desjardins M."/>
            <person name="Thibault P."/>
        </authorList>
    </citation>
    <scope>PHOSPHORYLATION [LARGE SCALE ANALYSIS] AT SER-392; SER-633; SER-738; SER-777 AND SER-1086</scope>
    <scope>IDENTIFICATION BY MASS SPECTROMETRY [LARGE SCALE ANALYSIS]</scope>
</reference>
<reference key="6">
    <citation type="journal article" date="2010" name="Cell">
        <title>A tissue-specific atlas of mouse protein phosphorylation and expression.</title>
        <authorList>
            <person name="Huttlin E.L."/>
            <person name="Jedrychowski M.P."/>
            <person name="Elias J.E."/>
            <person name="Goswami T."/>
            <person name="Rad R."/>
            <person name="Beausoleil S.A."/>
            <person name="Villen J."/>
            <person name="Haas W."/>
            <person name="Sowa M.E."/>
            <person name="Gygi S.P."/>
        </authorList>
    </citation>
    <scope>PHOSPHORYLATION [LARGE SCALE ANALYSIS] AT SER-392; SER-612; SER-738; THR-742; SER-749 AND THR-751</scope>
    <scope>IDENTIFICATION BY MASS SPECTROMETRY [LARGE SCALE ANALYSIS]</scope>
    <source>
        <tissue>Brain</tissue>
        <tissue>Brown adipose tissue</tissue>
        <tissue>Heart</tissue>
        <tissue>Kidney</tissue>
        <tissue>Liver</tissue>
        <tissue>Lung</tissue>
        <tissue>Pancreas</tissue>
        <tissue>Spleen</tissue>
        <tissue>Testis</tissue>
    </source>
</reference>
<reference key="7">
    <citation type="journal article" date="2014" name="Mol. Cell. Proteomics">
        <title>Immunoaffinity enrichment and mass spectrometry analysis of protein methylation.</title>
        <authorList>
            <person name="Guo A."/>
            <person name="Gu H."/>
            <person name="Zhou J."/>
            <person name="Mulhern D."/>
            <person name="Wang Y."/>
            <person name="Lee K.A."/>
            <person name="Yang V."/>
            <person name="Aguiar M."/>
            <person name="Kornhauser J."/>
            <person name="Jia X."/>
            <person name="Ren J."/>
            <person name="Beausoleil S.A."/>
            <person name="Silva J.C."/>
            <person name="Vemulapalli V."/>
            <person name="Bedford M.T."/>
            <person name="Comb M.J."/>
        </authorList>
    </citation>
    <scope>METHYLATION [LARGE SCALE ANALYSIS] AT ARG-1432 AND ARG-1438</scope>
    <scope>IDENTIFICATION BY MASS SPECTROMETRY [LARGE SCALE ANALYSIS]</scope>
    <source>
        <tissue>Brain</tissue>
        <tissue>Embryo</tissue>
    </source>
</reference>
<name>RPRD2_MOUSE</name>
<keyword id="KW-0007">Acetylation</keyword>
<keyword id="KW-0025">Alternative splicing</keyword>
<keyword id="KW-0488">Methylation</keyword>
<keyword id="KW-0597">Phosphoprotein</keyword>
<keyword id="KW-1185">Reference proteome</keyword>
<feature type="initiator methionine" description="Removed" evidence="2">
    <location>
        <position position="1"/>
    </location>
</feature>
<feature type="chain" id="PRO_0000244356" description="Regulation of nuclear pre-mRNA domain-containing protein 2">
    <location>
        <begin position="2"/>
        <end position="1469"/>
    </location>
</feature>
<feature type="domain" description="CID" evidence="3">
    <location>
        <begin position="19"/>
        <end position="149"/>
    </location>
</feature>
<feature type="region of interest" description="Disordered" evidence="4">
    <location>
        <begin position="329"/>
        <end position="445"/>
    </location>
</feature>
<feature type="region of interest" description="Disordered" evidence="4">
    <location>
        <begin position="489"/>
        <end position="524"/>
    </location>
</feature>
<feature type="region of interest" description="Disordered" evidence="4">
    <location>
        <begin position="572"/>
        <end position="594"/>
    </location>
</feature>
<feature type="region of interest" description="Disordered" evidence="4">
    <location>
        <begin position="647"/>
        <end position="686"/>
    </location>
</feature>
<feature type="region of interest" description="Disordered" evidence="4">
    <location>
        <begin position="716"/>
        <end position="867"/>
    </location>
</feature>
<feature type="region of interest" description="Disordered" evidence="4">
    <location>
        <begin position="919"/>
        <end position="1013"/>
    </location>
</feature>
<feature type="region of interest" description="Disordered" evidence="4">
    <location>
        <begin position="1033"/>
        <end position="1140"/>
    </location>
</feature>
<feature type="region of interest" description="Disordered" evidence="4">
    <location>
        <begin position="1154"/>
        <end position="1183"/>
    </location>
</feature>
<feature type="region of interest" description="Disordered" evidence="4">
    <location>
        <begin position="1204"/>
        <end position="1328"/>
    </location>
</feature>
<feature type="region of interest" description="Disordered" evidence="4">
    <location>
        <begin position="1368"/>
        <end position="1414"/>
    </location>
</feature>
<feature type="compositionally biased region" description="Basic and acidic residues" evidence="4">
    <location>
        <begin position="370"/>
        <end position="386"/>
    </location>
</feature>
<feature type="compositionally biased region" description="Acidic residues" evidence="4">
    <location>
        <begin position="387"/>
        <end position="396"/>
    </location>
</feature>
<feature type="compositionally biased region" description="Basic and acidic residues" evidence="4">
    <location>
        <begin position="397"/>
        <end position="412"/>
    </location>
</feature>
<feature type="compositionally biased region" description="Polar residues" evidence="4">
    <location>
        <begin position="419"/>
        <end position="430"/>
    </location>
</feature>
<feature type="compositionally biased region" description="Pro residues" evidence="4">
    <location>
        <begin position="434"/>
        <end position="445"/>
    </location>
</feature>
<feature type="compositionally biased region" description="Low complexity" evidence="4">
    <location>
        <begin position="576"/>
        <end position="591"/>
    </location>
</feature>
<feature type="compositionally biased region" description="Polar residues" evidence="4">
    <location>
        <begin position="647"/>
        <end position="656"/>
    </location>
</feature>
<feature type="compositionally biased region" description="Polar residues" evidence="4">
    <location>
        <begin position="761"/>
        <end position="771"/>
    </location>
</feature>
<feature type="compositionally biased region" description="Low complexity" evidence="4">
    <location>
        <begin position="777"/>
        <end position="787"/>
    </location>
</feature>
<feature type="compositionally biased region" description="Polar residues" evidence="4">
    <location>
        <begin position="959"/>
        <end position="982"/>
    </location>
</feature>
<feature type="compositionally biased region" description="Polar residues" evidence="4">
    <location>
        <begin position="1047"/>
        <end position="1073"/>
    </location>
</feature>
<feature type="compositionally biased region" description="Low complexity" evidence="4">
    <location>
        <begin position="1159"/>
        <end position="1168"/>
    </location>
</feature>
<feature type="compositionally biased region" description="Gly residues" evidence="4">
    <location>
        <begin position="1169"/>
        <end position="1178"/>
    </location>
</feature>
<feature type="compositionally biased region" description="Pro residues" evidence="4">
    <location>
        <begin position="1272"/>
        <end position="1295"/>
    </location>
</feature>
<feature type="compositionally biased region" description="Low complexity" evidence="4">
    <location>
        <begin position="1377"/>
        <end position="1390"/>
    </location>
</feature>
<feature type="compositionally biased region" description="Low complexity" evidence="4">
    <location>
        <begin position="1400"/>
        <end position="1409"/>
    </location>
</feature>
<feature type="modified residue" description="N-acetylalanine" evidence="2">
    <location>
        <position position="2"/>
    </location>
</feature>
<feature type="modified residue" description="Phosphoserine" evidence="2">
    <location>
        <position position="16"/>
    </location>
</feature>
<feature type="modified residue" description="Phosphoserine" evidence="2">
    <location>
        <position position="374"/>
    </location>
</feature>
<feature type="modified residue" description="Phosphothreonine" evidence="2">
    <location>
        <position position="376"/>
    </location>
</feature>
<feature type="modified residue" description="Phosphoserine" evidence="8 9 10">
    <location>
        <position position="392"/>
    </location>
</feature>
<feature type="modified residue" description="Phosphoserine" evidence="2">
    <location>
        <position position="492"/>
    </location>
</feature>
<feature type="modified residue" description="Phosphoserine" evidence="2">
    <location>
        <position position="495"/>
    </location>
</feature>
<feature type="modified residue" description="Phosphoserine" evidence="2">
    <location>
        <position position="498"/>
    </location>
</feature>
<feature type="modified residue" description="Phosphoserine" evidence="2">
    <location>
        <position position="504"/>
    </location>
</feature>
<feature type="modified residue" description="Phosphothreonine" evidence="2">
    <location>
        <position position="536"/>
    </location>
</feature>
<feature type="modified residue" description="Phosphoserine" evidence="2">
    <location>
        <position position="583"/>
    </location>
</feature>
<feature type="modified residue" description="Phosphoserine" evidence="10">
    <location>
        <position position="612"/>
    </location>
</feature>
<feature type="modified residue" description="Phosphothreonine" evidence="2">
    <location>
        <position position="617"/>
    </location>
</feature>
<feature type="modified residue" description="Phosphoserine" evidence="9">
    <location>
        <position position="633"/>
    </location>
</feature>
<feature type="modified residue" description="Phosphoserine" evidence="2">
    <location>
        <position position="682"/>
    </location>
</feature>
<feature type="modified residue" description="Phosphoserine" evidence="2">
    <location>
        <position position="684"/>
    </location>
</feature>
<feature type="modified residue" description="Phosphoserine" evidence="2">
    <location>
        <position position="735"/>
    </location>
</feature>
<feature type="modified residue" description="Phosphoserine" evidence="8 9 10">
    <location>
        <position position="738"/>
    </location>
</feature>
<feature type="modified residue" description="Phosphothreonine" evidence="8 10">
    <location>
        <position position="742"/>
    </location>
</feature>
<feature type="modified residue" description="Phosphoserine" evidence="10">
    <location>
        <position position="749"/>
    </location>
</feature>
<feature type="modified residue" description="Phosphothreonine" evidence="10">
    <location>
        <position position="751"/>
    </location>
</feature>
<feature type="modified residue" description="Phosphoserine" evidence="9">
    <location>
        <position position="777"/>
    </location>
</feature>
<feature type="modified residue" description="Phosphoserine" evidence="2">
    <location>
        <position position="781"/>
    </location>
</feature>
<feature type="modified residue" description="Phosphothreonine" evidence="2">
    <location>
        <position position="782"/>
    </location>
</feature>
<feature type="modified residue" description="Phosphoserine" evidence="2">
    <location>
        <position position="788"/>
    </location>
</feature>
<feature type="modified residue" description="Phosphoserine" evidence="2">
    <location>
        <position position="836"/>
    </location>
</feature>
<feature type="modified residue" description="Phosphoserine" evidence="2">
    <location>
        <position position="845"/>
    </location>
</feature>
<feature type="modified residue" description="Phosphoserine" evidence="2">
    <location>
        <position position="919"/>
    </location>
</feature>
<feature type="modified residue" description="Phosphoserine" evidence="2">
    <location>
        <position position="947"/>
    </location>
</feature>
<feature type="modified residue" description="Phosphoserine" evidence="2">
    <location>
        <position position="984"/>
    </location>
</feature>
<feature type="modified residue" description="Phosphoserine" evidence="2">
    <location>
        <position position="995"/>
    </location>
</feature>
<feature type="modified residue" description="Phosphoserine" evidence="9">
    <location>
        <position position="1086"/>
    </location>
</feature>
<feature type="modified residue" description="Phosphoserine" evidence="2">
    <location>
        <position position="1117"/>
    </location>
</feature>
<feature type="modified residue" description="Asymmetric dimethylarginine" evidence="2">
    <location>
        <position position="1375"/>
    </location>
</feature>
<feature type="modified residue" description="Asymmetric dimethylarginine" evidence="11">
    <location>
        <position position="1432"/>
    </location>
</feature>
<feature type="modified residue" description="Asymmetric dimethylarginine" evidence="11">
    <location>
        <position position="1438"/>
    </location>
</feature>
<feature type="splice variant" id="VSP_019548" description="In isoform 2." evidence="5 6">
    <location>
        <begin position="146"/>
        <end position="189"/>
    </location>
</feature>
<feature type="sequence conflict" description="In Ref. 2; BAC97960." evidence="7" ref="2">
    <original>V</original>
    <variation>K</variation>
    <location>
        <position position="491"/>
    </location>
</feature>
<feature type="sequence conflict" description="In Ref. 3; BAE32767." evidence="7" ref="3">
    <original>S</original>
    <variation>N</variation>
    <location>
        <position position="646"/>
    </location>
</feature>